<name>MEP4_TRIVH</name>
<organism>
    <name type="scientific">Trichophyton verrucosum (strain HKI 0517)</name>
    <dbReference type="NCBI Taxonomy" id="663202"/>
    <lineage>
        <taxon>Eukaryota</taxon>
        <taxon>Fungi</taxon>
        <taxon>Dikarya</taxon>
        <taxon>Ascomycota</taxon>
        <taxon>Pezizomycotina</taxon>
        <taxon>Eurotiomycetes</taxon>
        <taxon>Eurotiomycetidae</taxon>
        <taxon>Onygenales</taxon>
        <taxon>Arthrodermataceae</taxon>
        <taxon>Trichophyton</taxon>
    </lineage>
</organism>
<reference key="1">
    <citation type="journal article" date="2011" name="Genome Biol.">
        <title>Comparative and functional genomics provide insights into the pathogenicity of dermatophytic fungi.</title>
        <authorList>
            <person name="Burmester A."/>
            <person name="Shelest E."/>
            <person name="Gloeckner G."/>
            <person name="Heddergott C."/>
            <person name="Schindler S."/>
            <person name="Staib P."/>
            <person name="Heidel A."/>
            <person name="Felder M."/>
            <person name="Petzold A."/>
            <person name="Szafranski K."/>
            <person name="Feuermann M."/>
            <person name="Pedruzzi I."/>
            <person name="Priebe S."/>
            <person name="Groth M."/>
            <person name="Winkler R."/>
            <person name="Li W."/>
            <person name="Kniemeyer O."/>
            <person name="Schroeckh V."/>
            <person name="Hertweck C."/>
            <person name="Hube B."/>
            <person name="White T.C."/>
            <person name="Platzer M."/>
            <person name="Guthke R."/>
            <person name="Heitman J."/>
            <person name="Woestemeyer J."/>
            <person name="Zipfel P.F."/>
            <person name="Monod M."/>
            <person name="Brakhage A.A."/>
        </authorList>
    </citation>
    <scope>NUCLEOTIDE SEQUENCE [LARGE SCALE GENOMIC DNA]</scope>
    <source>
        <strain>HKI 0517</strain>
    </source>
</reference>
<sequence>MHGLLLAGLLALPLNVFAHPTESHSSGVSRRAIDITSYRLPQISKYTKSDAVPKQDGESFTTSSTGDDNVSSGDYVTTATNWLKKTLPKATYRLVNDHYIGDSGIGHVHFRQTAHGIDIDNTDFNVNIGRDGKVFSFGNSFYDGEIPKANPMVKRDFSDPVNALHGAIQTLNLPVTAKPENVKAKPVEGKENFKFEGTSGALSDPKAQLVYLQKDGGLVLSWKVETDVGDNWLLTYVDANKNDQVHSVVDYVSAAEYQVYPWGINDPTEGNRTTIHLPWLKTLSTDWHIDGKGWYPTTRGNNAIAQENPTGHPEYENNYRPKSPLFIFKYPYSPAMTPPSSYRDASITQLFYTTNVYHDVLYILGFNEKAGNFQINNWNKGGVGGDFAILNSQDGSGVNNANFATPPDGQPGRMRMYTWNASTPERDGCFEAGIVIHEYTHGVSNRLTGGPENSRCLAALESGGMGEGWSDFFATAIRLKAGDTRATDYTMGEWASNRPNGIRKYRYSTSLTTNPHMYVDADGLTSVHAIGTIWASMLYELLWNLIDKHGKGDVTKIRPVLKNGVPTDGRHLAMKIVLDGMALQPCLPNFVQARDAILDADKNLTQGSNKCEIWKAFAKRGLGVGAAFNQTKRTGSNELPAGC</sequence>
<feature type="signal peptide" evidence="2">
    <location>
        <begin position="1"/>
        <end position="18"/>
    </location>
</feature>
<feature type="propeptide" id="PRO_0000397736" evidence="1">
    <location>
        <begin position="19"/>
        <end position="254"/>
    </location>
</feature>
<feature type="chain" id="PRO_0000397737" description="Probable extracellular metalloproteinase 4">
    <location>
        <begin position="255"/>
        <end position="643"/>
    </location>
</feature>
<feature type="region of interest" description="Disordered" evidence="4">
    <location>
        <begin position="49"/>
        <end position="69"/>
    </location>
</feature>
<feature type="compositionally biased region" description="Polar residues" evidence="4">
    <location>
        <begin position="58"/>
        <end position="69"/>
    </location>
</feature>
<feature type="active site" evidence="3">
    <location>
        <position position="438"/>
    </location>
</feature>
<feature type="binding site" evidence="3">
    <location>
        <position position="437"/>
    </location>
    <ligand>
        <name>Zn(2+)</name>
        <dbReference type="ChEBI" id="CHEBI:29105"/>
        <note>catalytic</note>
    </ligand>
</feature>
<feature type="binding site" evidence="3">
    <location>
        <position position="441"/>
    </location>
    <ligand>
        <name>Zn(2+)</name>
        <dbReference type="ChEBI" id="CHEBI:29105"/>
        <note>catalytic</note>
    </ligand>
</feature>
<feature type="glycosylation site" description="N-linked (GlcNAc...) asparagine" evidence="2">
    <location>
        <position position="271"/>
    </location>
</feature>
<feature type="glycosylation site" description="N-linked (GlcNAc...) asparagine" evidence="2">
    <location>
        <position position="420"/>
    </location>
</feature>
<feature type="glycosylation site" description="N-linked (GlcNAc...) asparagine" evidence="2">
    <location>
        <position position="603"/>
    </location>
</feature>
<feature type="glycosylation site" description="N-linked (GlcNAc...) asparagine" evidence="2">
    <location>
        <position position="629"/>
    </location>
</feature>
<accession>D4CZ44</accession>
<keyword id="KW-0325">Glycoprotein</keyword>
<keyword id="KW-0378">Hydrolase</keyword>
<keyword id="KW-0479">Metal-binding</keyword>
<keyword id="KW-0482">Metalloprotease</keyword>
<keyword id="KW-0645">Protease</keyword>
<keyword id="KW-0964">Secreted</keyword>
<keyword id="KW-0732">Signal</keyword>
<keyword id="KW-0843">Virulence</keyword>
<keyword id="KW-0862">Zinc</keyword>
<keyword id="KW-0865">Zymogen</keyword>
<evidence type="ECO:0000250" key="1"/>
<evidence type="ECO:0000255" key="2"/>
<evidence type="ECO:0000255" key="3">
    <source>
        <dbReference type="PROSITE-ProRule" id="PRU10095"/>
    </source>
</evidence>
<evidence type="ECO:0000256" key="4">
    <source>
        <dbReference type="SAM" id="MobiDB-lite"/>
    </source>
</evidence>
<evidence type="ECO:0000305" key="5"/>
<proteinExistence type="inferred from homology"/>
<dbReference type="EC" id="3.4.24.-"/>
<dbReference type="EMBL" id="ACYE01000003">
    <property type="protein sequence ID" value="EFE45143.1"/>
    <property type="molecule type" value="Genomic_DNA"/>
</dbReference>
<dbReference type="RefSeq" id="XP_003025754.1">
    <property type="nucleotide sequence ID" value="XM_003025708.1"/>
</dbReference>
<dbReference type="SMR" id="D4CZ44"/>
<dbReference type="MEROPS" id="M36.001"/>
<dbReference type="GlyCosmos" id="D4CZ44">
    <property type="glycosylation" value="4 sites, No reported glycans"/>
</dbReference>
<dbReference type="GeneID" id="9581985"/>
<dbReference type="KEGG" id="tve:TRV_00081"/>
<dbReference type="HOGENOM" id="CLU_012703_3_0_1"/>
<dbReference type="OrthoDB" id="810at34384"/>
<dbReference type="Proteomes" id="UP000008383">
    <property type="component" value="Unassembled WGS sequence"/>
</dbReference>
<dbReference type="GO" id="GO:0005576">
    <property type="term" value="C:extracellular region"/>
    <property type="evidence" value="ECO:0007669"/>
    <property type="project" value="UniProtKB-SubCell"/>
</dbReference>
<dbReference type="GO" id="GO:0004222">
    <property type="term" value="F:metalloendopeptidase activity"/>
    <property type="evidence" value="ECO:0007669"/>
    <property type="project" value="InterPro"/>
</dbReference>
<dbReference type="GO" id="GO:0008270">
    <property type="term" value="F:zinc ion binding"/>
    <property type="evidence" value="ECO:0007669"/>
    <property type="project" value="InterPro"/>
</dbReference>
<dbReference type="GO" id="GO:0006508">
    <property type="term" value="P:proteolysis"/>
    <property type="evidence" value="ECO:0007669"/>
    <property type="project" value="UniProtKB-KW"/>
</dbReference>
<dbReference type="CDD" id="cd09596">
    <property type="entry name" value="M36"/>
    <property type="match status" value="1"/>
</dbReference>
<dbReference type="Gene3D" id="3.10.170.10">
    <property type="match status" value="1"/>
</dbReference>
<dbReference type="Gene3D" id="1.10.390.10">
    <property type="entry name" value="Neutral Protease Domain 2"/>
    <property type="match status" value="1"/>
</dbReference>
<dbReference type="InterPro" id="IPR011096">
    <property type="entry name" value="FTP_domain"/>
</dbReference>
<dbReference type="InterPro" id="IPR050371">
    <property type="entry name" value="Fungal_virulence_M36"/>
</dbReference>
<dbReference type="InterPro" id="IPR001842">
    <property type="entry name" value="Peptidase_M36"/>
</dbReference>
<dbReference type="InterPro" id="IPR027268">
    <property type="entry name" value="Peptidase_M4/M1_CTD_sf"/>
</dbReference>
<dbReference type="PANTHER" id="PTHR33478">
    <property type="entry name" value="EXTRACELLULAR METALLOPROTEINASE MEP"/>
    <property type="match status" value="1"/>
</dbReference>
<dbReference type="PANTHER" id="PTHR33478:SF1">
    <property type="entry name" value="EXTRACELLULAR METALLOPROTEINASE MEP"/>
    <property type="match status" value="1"/>
</dbReference>
<dbReference type="Pfam" id="PF07504">
    <property type="entry name" value="FTP"/>
    <property type="match status" value="1"/>
</dbReference>
<dbReference type="Pfam" id="PF02128">
    <property type="entry name" value="Peptidase_M36"/>
    <property type="match status" value="1"/>
</dbReference>
<dbReference type="PRINTS" id="PR00999">
    <property type="entry name" value="FUNGALYSIN"/>
</dbReference>
<dbReference type="SUPFAM" id="SSF55486">
    <property type="entry name" value="Metalloproteases ('zincins'), catalytic domain"/>
    <property type="match status" value="1"/>
</dbReference>
<dbReference type="PROSITE" id="PS00142">
    <property type="entry name" value="ZINC_PROTEASE"/>
    <property type="match status" value="1"/>
</dbReference>
<comment type="function">
    <text evidence="1">Secreted metalloproteinase probably acting as a virulence factor.</text>
</comment>
<comment type="cofactor">
    <cofactor evidence="1">
        <name>Zn(2+)</name>
        <dbReference type="ChEBI" id="CHEBI:29105"/>
    </cofactor>
    <text evidence="1">Binds 1 zinc ion per subunit.</text>
</comment>
<comment type="subcellular location">
    <subcellularLocation>
        <location evidence="1">Secreted</location>
    </subcellularLocation>
</comment>
<comment type="similarity">
    <text evidence="5">Belongs to the peptidase M36 family.</text>
</comment>
<protein>
    <recommendedName>
        <fullName>Probable extracellular metalloproteinase 4</fullName>
        <ecNumber>3.4.24.-</ecNumber>
    </recommendedName>
    <alternativeName>
        <fullName>Fungalysin MEP4</fullName>
    </alternativeName>
</protein>
<gene>
    <name type="primary">MEP4</name>
    <name type="ORF">TRV_00081</name>
</gene>